<evidence type="ECO:0000250" key="1">
    <source>
        <dbReference type="UniProtKB" id="Q3KR82"/>
    </source>
</evidence>
<evidence type="ECO:0000250" key="2">
    <source>
        <dbReference type="UniProtKB" id="Q8BFU1"/>
    </source>
</evidence>
<evidence type="ECO:0000250" key="3">
    <source>
        <dbReference type="UniProtKB" id="Q9NUM3"/>
    </source>
</evidence>
<evidence type="ECO:0000255" key="4"/>
<evidence type="ECO:0000269" key="5">
    <source>
    </source>
</evidence>
<evidence type="ECO:0000305" key="6"/>
<accession>Q5ZIU9</accession>
<dbReference type="EMBL" id="AJ720685">
    <property type="protein sequence ID" value="CAG32344.1"/>
    <property type="molecule type" value="mRNA"/>
</dbReference>
<dbReference type="RefSeq" id="NP_001007934.1">
    <property type="nucleotide sequence ID" value="NM_001007933.2"/>
</dbReference>
<dbReference type="SMR" id="Q5ZIU9"/>
<dbReference type="FunCoup" id="Q5ZIU9">
    <property type="interactions" value="1824"/>
</dbReference>
<dbReference type="STRING" id="9031.ENSGALP00000067415"/>
<dbReference type="GlyCosmos" id="Q5ZIU9">
    <property type="glycosylation" value="2 sites, No reported glycans"/>
</dbReference>
<dbReference type="GlyGen" id="Q5ZIU9">
    <property type="glycosylation" value="2 sites"/>
</dbReference>
<dbReference type="PaxDb" id="9031-ENSGALP00000041693"/>
<dbReference type="GeneID" id="423261"/>
<dbReference type="KEGG" id="gga:423261"/>
<dbReference type="CTD" id="55334"/>
<dbReference type="VEuPathDB" id="HostDB:geneid_423261"/>
<dbReference type="eggNOG" id="KOG3907">
    <property type="taxonomic scope" value="Eukaryota"/>
</dbReference>
<dbReference type="HOGENOM" id="CLU_028824_1_0_1"/>
<dbReference type="InParanoid" id="Q5ZIU9"/>
<dbReference type="OrthoDB" id="19859at2759"/>
<dbReference type="PhylomeDB" id="Q5ZIU9"/>
<dbReference type="TreeFam" id="TF315051"/>
<dbReference type="PRO" id="PR:Q5ZIU9"/>
<dbReference type="Proteomes" id="UP000000539">
    <property type="component" value="Chromosome 5"/>
</dbReference>
<dbReference type="Bgee" id="ENSGALG00000009438">
    <property type="expression patterns" value="Expressed in testis and 13 other cell types or tissues"/>
</dbReference>
<dbReference type="GO" id="GO:0031966">
    <property type="term" value="C:mitochondrial membrane"/>
    <property type="evidence" value="ECO:0000250"/>
    <property type="project" value="UniProtKB"/>
</dbReference>
<dbReference type="GO" id="GO:0005739">
    <property type="term" value="C:mitochondrion"/>
    <property type="evidence" value="ECO:0000250"/>
    <property type="project" value="UniProtKB"/>
</dbReference>
<dbReference type="GO" id="GO:0005634">
    <property type="term" value="C:nucleus"/>
    <property type="evidence" value="ECO:0000250"/>
    <property type="project" value="UniProtKB"/>
</dbReference>
<dbReference type="GO" id="GO:0048471">
    <property type="term" value="C:perinuclear region of cytoplasm"/>
    <property type="evidence" value="ECO:0000250"/>
    <property type="project" value="UniProtKB"/>
</dbReference>
<dbReference type="GO" id="GO:0005886">
    <property type="term" value="C:plasma membrane"/>
    <property type="evidence" value="ECO:0000250"/>
    <property type="project" value="UniProtKB"/>
</dbReference>
<dbReference type="GO" id="GO:0005802">
    <property type="term" value="C:trans-Golgi network"/>
    <property type="evidence" value="ECO:0000250"/>
    <property type="project" value="UniProtKB"/>
</dbReference>
<dbReference type="GO" id="GO:0005497">
    <property type="term" value="F:androgen binding"/>
    <property type="evidence" value="ECO:0000250"/>
    <property type="project" value="UniProtKB"/>
</dbReference>
<dbReference type="GO" id="GO:0004930">
    <property type="term" value="F:G protein-coupled receptor activity"/>
    <property type="evidence" value="ECO:0000250"/>
    <property type="project" value="UniProtKB"/>
</dbReference>
<dbReference type="GO" id="GO:0022883">
    <property type="term" value="F:zinc efflux transmembrane transporter activity"/>
    <property type="evidence" value="ECO:0000250"/>
    <property type="project" value="UniProtKB"/>
</dbReference>
<dbReference type="GO" id="GO:0005385">
    <property type="term" value="F:zinc ion transmembrane transporter activity"/>
    <property type="evidence" value="ECO:0000315"/>
    <property type="project" value="UniProtKB"/>
</dbReference>
<dbReference type="GO" id="GO:0070830">
    <property type="term" value="P:bicellular tight junction assembly"/>
    <property type="evidence" value="ECO:0000250"/>
    <property type="project" value="UniProtKB"/>
</dbReference>
<dbReference type="GO" id="GO:0006882">
    <property type="term" value="P:intracellular zinc ion homeostasis"/>
    <property type="evidence" value="ECO:0000314"/>
    <property type="project" value="UniProtKB"/>
</dbReference>
<dbReference type="GO" id="GO:2000654">
    <property type="term" value="P:regulation of cellular response to testosterone stimulus"/>
    <property type="evidence" value="ECO:0000250"/>
    <property type="project" value="UniProtKB"/>
</dbReference>
<dbReference type="GO" id="GO:1905562">
    <property type="term" value="P:regulation of vascular endothelial cell proliferation"/>
    <property type="evidence" value="ECO:0000250"/>
    <property type="project" value="UniProtKB"/>
</dbReference>
<dbReference type="GO" id="GO:0071577">
    <property type="term" value="P:zinc ion transmembrane transport"/>
    <property type="evidence" value="ECO:0000250"/>
    <property type="project" value="UniProtKB"/>
</dbReference>
<dbReference type="InterPro" id="IPR003689">
    <property type="entry name" value="ZIP"/>
</dbReference>
<dbReference type="InterPro" id="IPR045891">
    <property type="entry name" value="ZIP9"/>
</dbReference>
<dbReference type="PANTHER" id="PTHR16133">
    <property type="entry name" value="SOLUTE CARRIER FAMILY 39 ZINC TRANSPORTER , MEMBER 9-RELATED"/>
    <property type="match status" value="1"/>
</dbReference>
<dbReference type="PANTHER" id="PTHR16133:SF5">
    <property type="entry name" value="ZINC TRANSPORTER ZIP9"/>
    <property type="match status" value="1"/>
</dbReference>
<dbReference type="Pfam" id="PF02535">
    <property type="entry name" value="Zip"/>
    <property type="match status" value="1"/>
</dbReference>
<proteinExistence type="evidence at transcript level"/>
<comment type="function">
    <text evidence="1 2 3 5">Transports zinc ions across cell and organelle membranes into the cytoplasm and regulates intracellular zinc homeostasis. Participates in the zinc ions efflux out of the secretory compartments (By similarity). Regulates intracellular zinc level, resulting in the enhancement of AKT1 and MAPK3/MAPK1 (Erk1/2) phosphorylation in response to the BCR activation (PubMed:23505453). Also functions as a membrane androgen receptor that mediates, through a G protein, the non-classical androgen signaling pathway, characterized by the activation of MAPK3/MAPK1 (Erk1/2) and transcription factors CREB1 or ATF1 (By similarity). Moreover, has dual functions as a membrane-bound androgen receptor and as an androgen-dependent zinc transporter both of which are mediated through an inhibitory G protein (Gi) that mediates both MAP kinase and zinc signaling leading to the androgen-dependent apoptotic process (By similarity).</text>
</comment>
<comment type="catalytic activity">
    <reaction evidence="3">
        <text>Zn(2+)(in) = Zn(2+)(out)</text>
        <dbReference type="Rhea" id="RHEA:29351"/>
        <dbReference type="ChEBI" id="CHEBI:29105"/>
    </reaction>
</comment>
<comment type="subcellular location">
    <subcellularLocation>
        <location evidence="3">Golgi apparatus</location>
        <location evidence="3">trans-Golgi network membrane</location>
    </subcellularLocation>
    <subcellularLocation>
        <location evidence="3">Cell membrane</location>
        <topology evidence="3">Multi-pass membrane protein</topology>
    </subcellularLocation>
    <subcellularLocation>
        <location evidence="3">Cytoplasm</location>
        <location evidence="3">Perinuclear region</location>
    </subcellularLocation>
    <subcellularLocation>
        <location evidence="3">Mitochondrion</location>
    </subcellularLocation>
    <subcellularLocation>
        <location evidence="3">Nucleus</location>
    </subcellularLocation>
</comment>
<comment type="similarity">
    <text evidence="6">Belongs to the ZIP transporter (TC 2.A.5) family.</text>
</comment>
<feature type="chain" id="PRO_0000297602" description="Zinc transporter ZIP9">
    <location>
        <begin position="1"/>
        <end position="305"/>
    </location>
</feature>
<feature type="transmembrane region" description="Helical" evidence="4">
    <location>
        <begin position="7"/>
        <end position="27"/>
    </location>
</feature>
<feature type="transmembrane region" description="Helical" evidence="4">
    <location>
        <begin position="35"/>
        <end position="55"/>
    </location>
</feature>
<feature type="transmembrane region" description="Helical" evidence="4">
    <location>
        <begin position="104"/>
        <end position="124"/>
    </location>
</feature>
<feature type="transmembrane region" description="Helical" evidence="4">
    <location>
        <begin position="144"/>
        <end position="164"/>
    </location>
</feature>
<feature type="transmembrane region" description="Helical" evidence="4">
    <location>
        <begin position="174"/>
        <end position="194"/>
    </location>
</feature>
<feature type="transmembrane region" description="Helical" evidence="4">
    <location>
        <begin position="208"/>
        <end position="228"/>
    </location>
</feature>
<feature type="transmembrane region" description="Helical" evidence="4">
    <location>
        <begin position="242"/>
        <end position="262"/>
    </location>
</feature>
<feature type="transmembrane region" description="Helical" evidence="4">
    <location>
        <begin position="284"/>
        <end position="304"/>
    </location>
</feature>
<feature type="glycosylation site" description="N-linked (GlcNAc...) asparagine" evidence="4">
    <location>
        <position position="29"/>
    </location>
</feature>
<feature type="glycosylation site" description="N-linked (GlcNAc...) asparagine" evidence="4">
    <location>
        <position position="239"/>
    </location>
</feature>
<sequence>MDDFRSICLLSLAMLVACYVAGIIPLAVNFSEERLKLVTVLGAGLLCGTALAVIVPEGVHALYEDILEGKHHPANEMQHVMESEKVAEIAVVHEYGHDHSRLHAYIGVSLVLGFVFMLLVDQIGSSHVHSTDDPEAARSGNSKITTTLGLVVHAAADGVALGAAASTSQTSVQLIVFVAIMLHKAPAAFGLVSFLMHAGLERNRIRKHLLVFALAAPVMSMVTYLGLSKSSKEALSEVNATGVAMLFSAGTFLYVATVHVLPEVGGIAHSHRPESTGGKGLSRLEVAALVLGCLIPLVLSIGHHH</sequence>
<name>S39A9_CHICK</name>
<gene>
    <name evidence="3" type="primary">SLC39A9</name>
    <name type="synonym">ZIP9</name>
    <name type="ORF">RCJMB04_23h6</name>
</gene>
<organism>
    <name type="scientific">Gallus gallus</name>
    <name type="common">Chicken</name>
    <dbReference type="NCBI Taxonomy" id="9031"/>
    <lineage>
        <taxon>Eukaryota</taxon>
        <taxon>Metazoa</taxon>
        <taxon>Chordata</taxon>
        <taxon>Craniata</taxon>
        <taxon>Vertebrata</taxon>
        <taxon>Euteleostomi</taxon>
        <taxon>Archelosauria</taxon>
        <taxon>Archosauria</taxon>
        <taxon>Dinosauria</taxon>
        <taxon>Saurischia</taxon>
        <taxon>Theropoda</taxon>
        <taxon>Coelurosauria</taxon>
        <taxon>Aves</taxon>
        <taxon>Neognathae</taxon>
        <taxon>Galloanserae</taxon>
        <taxon>Galliformes</taxon>
        <taxon>Phasianidae</taxon>
        <taxon>Phasianinae</taxon>
        <taxon>Gallus</taxon>
    </lineage>
</organism>
<protein>
    <recommendedName>
        <fullName evidence="3">Zinc transporter ZIP9</fullName>
    </recommendedName>
    <alternativeName>
        <fullName>Solute carrier family 39 member 9</fullName>
    </alternativeName>
    <alternativeName>
        <fullName>Zrt- and Irt-like protein 9</fullName>
        <shortName>ZIP-9</shortName>
    </alternativeName>
</protein>
<reference key="1">
    <citation type="journal article" date="2005" name="Genome Biol.">
        <title>Full-length cDNAs from chicken bursal lymphocytes to facilitate gene function analysis.</title>
        <authorList>
            <person name="Caldwell R.B."/>
            <person name="Kierzek A.M."/>
            <person name="Arakawa H."/>
            <person name="Bezzubov Y."/>
            <person name="Zaim J."/>
            <person name="Fiedler P."/>
            <person name="Kutter S."/>
            <person name="Blagodatski A."/>
            <person name="Kostovska D."/>
            <person name="Koter M."/>
            <person name="Plachy J."/>
            <person name="Carninci P."/>
            <person name="Hayashizaki Y."/>
            <person name="Buerstedde J.-M."/>
        </authorList>
    </citation>
    <scope>NUCLEOTIDE SEQUENCE [LARGE SCALE MRNA]</scope>
    <source>
        <strain>CB</strain>
        <tissue>Bursa of Fabricius</tissue>
    </source>
</reference>
<reference key="2">
    <citation type="journal article" date="2013" name="PLoS ONE">
        <title>Essential role of the zinc transporter ZIP9/SLC39A9 in regulating the activations of Akt and Erk in B-cell receptor signaling pathway in DT40 cells.</title>
        <authorList>
            <person name="Taniguchi M."/>
            <person name="Fukunaka A."/>
            <person name="Hagihara M."/>
            <person name="Watanabe K."/>
            <person name="Kamino S."/>
            <person name="Kambe T."/>
            <person name="Enomoto S."/>
            <person name="Hiromura M."/>
        </authorList>
    </citation>
    <scope>FUNCTION</scope>
</reference>
<keyword id="KW-1003">Cell membrane</keyword>
<keyword id="KW-0963">Cytoplasm</keyword>
<keyword id="KW-0325">Glycoprotein</keyword>
<keyword id="KW-0333">Golgi apparatus</keyword>
<keyword id="KW-0406">Ion transport</keyword>
<keyword id="KW-0472">Membrane</keyword>
<keyword id="KW-0496">Mitochondrion</keyword>
<keyword id="KW-0539">Nucleus</keyword>
<keyword id="KW-1185">Reference proteome</keyword>
<keyword id="KW-0812">Transmembrane</keyword>
<keyword id="KW-1133">Transmembrane helix</keyword>
<keyword id="KW-0813">Transport</keyword>
<keyword id="KW-0862">Zinc</keyword>
<keyword id="KW-0864">Zinc transport</keyword>